<keyword id="KW-0687">Ribonucleoprotein</keyword>
<keyword id="KW-0689">Ribosomal protein</keyword>
<keyword id="KW-0694">RNA-binding</keyword>
<keyword id="KW-0699">rRNA-binding</keyword>
<proteinExistence type="inferred from homology"/>
<dbReference type="EMBL" id="CP001120">
    <property type="protein sequence ID" value="ACF70348.1"/>
    <property type="molecule type" value="Genomic_DNA"/>
</dbReference>
<dbReference type="RefSeq" id="WP_000059465.1">
    <property type="nucleotide sequence ID" value="NC_011083.1"/>
</dbReference>
<dbReference type="SMR" id="B4TJ03"/>
<dbReference type="GeneID" id="93035884"/>
<dbReference type="KEGG" id="seh:SeHA_C3577"/>
<dbReference type="HOGENOM" id="CLU_148518_0_0_6"/>
<dbReference type="Proteomes" id="UP000001866">
    <property type="component" value="Chromosome"/>
</dbReference>
<dbReference type="GO" id="GO:0022627">
    <property type="term" value="C:cytosolic small ribosomal subunit"/>
    <property type="evidence" value="ECO:0007669"/>
    <property type="project" value="TreeGrafter"/>
</dbReference>
<dbReference type="GO" id="GO:0019843">
    <property type="term" value="F:rRNA binding"/>
    <property type="evidence" value="ECO:0007669"/>
    <property type="project" value="UniProtKB-UniRule"/>
</dbReference>
<dbReference type="GO" id="GO:0003735">
    <property type="term" value="F:structural constituent of ribosome"/>
    <property type="evidence" value="ECO:0007669"/>
    <property type="project" value="InterPro"/>
</dbReference>
<dbReference type="GO" id="GO:0006412">
    <property type="term" value="P:translation"/>
    <property type="evidence" value="ECO:0007669"/>
    <property type="project" value="UniProtKB-UniRule"/>
</dbReference>
<dbReference type="CDD" id="cd00353">
    <property type="entry name" value="Ribosomal_S15p_S13e"/>
    <property type="match status" value="1"/>
</dbReference>
<dbReference type="FunFam" id="1.10.287.10:FF:000002">
    <property type="entry name" value="30S ribosomal protein S15"/>
    <property type="match status" value="1"/>
</dbReference>
<dbReference type="Gene3D" id="6.10.250.3130">
    <property type="match status" value="1"/>
</dbReference>
<dbReference type="Gene3D" id="1.10.287.10">
    <property type="entry name" value="S15/NS1, RNA-binding"/>
    <property type="match status" value="1"/>
</dbReference>
<dbReference type="HAMAP" id="MF_01343_B">
    <property type="entry name" value="Ribosomal_uS15_B"/>
    <property type="match status" value="1"/>
</dbReference>
<dbReference type="InterPro" id="IPR000589">
    <property type="entry name" value="Ribosomal_uS15"/>
</dbReference>
<dbReference type="InterPro" id="IPR005290">
    <property type="entry name" value="Ribosomal_uS15_bac-type"/>
</dbReference>
<dbReference type="InterPro" id="IPR009068">
    <property type="entry name" value="uS15_NS1_RNA-bd_sf"/>
</dbReference>
<dbReference type="NCBIfam" id="TIGR00952">
    <property type="entry name" value="S15_bact"/>
    <property type="match status" value="1"/>
</dbReference>
<dbReference type="PANTHER" id="PTHR23321">
    <property type="entry name" value="RIBOSOMAL PROTEIN S15, BACTERIAL AND ORGANELLAR"/>
    <property type="match status" value="1"/>
</dbReference>
<dbReference type="PANTHER" id="PTHR23321:SF26">
    <property type="entry name" value="SMALL RIBOSOMAL SUBUNIT PROTEIN US15M"/>
    <property type="match status" value="1"/>
</dbReference>
<dbReference type="Pfam" id="PF00312">
    <property type="entry name" value="Ribosomal_S15"/>
    <property type="match status" value="1"/>
</dbReference>
<dbReference type="SMART" id="SM01387">
    <property type="entry name" value="Ribosomal_S15"/>
    <property type="match status" value="1"/>
</dbReference>
<dbReference type="SUPFAM" id="SSF47060">
    <property type="entry name" value="S15/NS1 RNA-binding domain"/>
    <property type="match status" value="1"/>
</dbReference>
<dbReference type="PROSITE" id="PS00362">
    <property type="entry name" value="RIBOSOMAL_S15"/>
    <property type="match status" value="1"/>
</dbReference>
<reference key="1">
    <citation type="journal article" date="2011" name="J. Bacteriol.">
        <title>Comparative genomics of 28 Salmonella enterica isolates: evidence for CRISPR-mediated adaptive sublineage evolution.</title>
        <authorList>
            <person name="Fricke W.F."/>
            <person name="Mammel M.K."/>
            <person name="McDermott P.F."/>
            <person name="Tartera C."/>
            <person name="White D.G."/>
            <person name="Leclerc J.E."/>
            <person name="Ravel J."/>
            <person name="Cebula T.A."/>
        </authorList>
    </citation>
    <scope>NUCLEOTIDE SEQUENCE [LARGE SCALE GENOMIC DNA]</scope>
    <source>
        <strain>SL476</strain>
    </source>
</reference>
<feature type="chain" id="PRO_1000143166" description="Small ribosomal subunit protein uS15">
    <location>
        <begin position="1"/>
        <end position="89"/>
    </location>
</feature>
<name>RS15_SALHS</name>
<organism>
    <name type="scientific">Salmonella heidelberg (strain SL476)</name>
    <dbReference type="NCBI Taxonomy" id="454169"/>
    <lineage>
        <taxon>Bacteria</taxon>
        <taxon>Pseudomonadati</taxon>
        <taxon>Pseudomonadota</taxon>
        <taxon>Gammaproteobacteria</taxon>
        <taxon>Enterobacterales</taxon>
        <taxon>Enterobacteriaceae</taxon>
        <taxon>Salmonella</taxon>
    </lineage>
</organism>
<evidence type="ECO:0000255" key="1">
    <source>
        <dbReference type="HAMAP-Rule" id="MF_01343"/>
    </source>
</evidence>
<evidence type="ECO:0000305" key="2"/>
<sequence length="89" mass="10198">MSLSTEATAKIVSEFGRDANDTGSTDVQVALLTAQINHLQGHFAEHKKDHHSRRGLLRMVSQRRKLLDYLKRKDVARYTALIERLGLRR</sequence>
<accession>B4TJ03</accession>
<gene>
    <name evidence="1" type="primary">rpsO</name>
    <name type="ordered locus">SeHA_C3577</name>
</gene>
<comment type="function">
    <text evidence="1">One of the primary rRNA binding proteins, it binds directly to 16S rRNA where it helps nucleate assembly of the platform of the 30S subunit by binding and bridging several RNA helices of the 16S rRNA.</text>
</comment>
<comment type="function">
    <text evidence="1">Forms an intersubunit bridge (bridge B4) with the 23S rRNA of the 50S subunit in the ribosome.</text>
</comment>
<comment type="subunit">
    <text evidence="1">Part of the 30S ribosomal subunit. Forms a bridge to the 50S subunit in the 70S ribosome, contacting the 23S rRNA.</text>
</comment>
<comment type="similarity">
    <text evidence="1">Belongs to the universal ribosomal protein uS15 family.</text>
</comment>
<protein>
    <recommendedName>
        <fullName evidence="1">Small ribosomal subunit protein uS15</fullName>
    </recommendedName>
    <alternativeName>
        <fullName evidence="2">30S ribosomal protein S15</fullName>
    </alternativeName>
</protein>